<protein>
    <recommendedName>
        <fullName>Phenylalanine--tRNA ligase alpha subunit</fullName>
        <ecNumber>6.1.1.20</ecNumber>
    </recommendedName>
    <alternativeName>
        <fullName>Phenylalanyl-tRNA synthetase alpha subunit</fullName>
        <shortName>PheRS</shortName>
    </alternativeName>
</protein>
<accession>P56146</accession>
<keyword id="KW-0030">Aminoacyl-tRNA synthetase</keyword>
<keyword id="KW-0067">ATP-binding</keyword>
<keyword id="KW-0963">Cytoplasm</keyword>
<keyword id="KW-0436">Ligase</keyword>
<keyword id="KW-0460">Magnesium</keyword>
<keyword id="KW-0479">Metal-binding</keyword>
<keyword id="KW-0547">Nucleotide-binding</keyword>
<keyword id="KW-0648">Protein biosynthesis</keyword>
<keyword id="KW-1185">Reference proteome</keyword>
<feature type="chain" id="PRO_0000126714" description="Phenylalanine--tRNA ligase alpha subunit">
    <location>
        <begin position="1"/>
        <end position="328"/>
    </location>
</feature>
<feature type="binding site" evidence="1">
    <location>
        <position position="245"/>
    </location>
    <ligand>
        <name>Mg(2+)</name>
        <dbReference type="ChEBI" id="CHEBI:18420"/>
        <note>shared with beta subunit</note>
    </ligand>
</feature>
<comment type="catalytic activity">
    <reaction>
        <text>tRNA(Phe) + L-phenylalanine + ATP = L-phenylalanyl-tRNA(Phe) + AMP + diphosphate + H(+)</text>
        <dbReference type="Rhea" id="RHEA:19413"/>
        <dbReference type="Rhea" id="RHEA-COMP:9668"/>
        <dbReference type="Rhea" id="RHEA-COMP:9699"/>
        <dbReference type="ChEBI" id="CHEBI:15378"/>
        <dbReference type="ChEBI" id="CHEBI:30616"/>
        <dbReference type="ChEBI" id="CHEBI:33019"/>
        <dbReference type="ChEBI" id="CHEBI:58095"/>
        <dbReference type="ChEBI" id="CHEBI:78442"/>
        <dbReference type="ChEBI" id="CHEBI:78531"/>
        <dbReference type="ChEBI" id="CHEBI:456215"/>
        <dbReference type="EC" id="6.1.1.20"/>
    </reaction>
</comment>
<comment type="cofactor">
    <cofactor evidence="1">
        <name>Mg(2+)</name>
        <dbReference type="ChEBI" id="CHEBI:18420"/>
    </cofactor>
    <text evidence="1">Binds 2 magnesium ions per tetramer.</text>
</comment>
<comment type="subunit">
    <text evidence="1">Tetramer of two alpha and two beta subunits.</text>
</comment>
<comment type="subcellular location">
    <subcellularLocation>
        <location evidence="1">Cytoplasm</location>
    </subcellularLocation>
</comment>
<comment type="similarity">
    <text evidence="2">Belongs to the class-II aminoacyl-tRNA synthetase family. Phe-tRNA synthetase alpha subunit type 1 subfamily.</text>
</comment>
<dbReference type="EC" id="6.1.1.20"/>
<dbReference type="EMBL" id="AE000511">
    <property type="protein sequence ID" value="AAD07472.1"/>
    <property type="molecule type" value="Genomic_DNA"/>
</dbReference>
<dbReference type="PIR" id="C64570">
    <property type="entry name" value="C64570"/>
</dbReference>
<dbReference type="RefSeq" id="NP_207201.1">
    <property type="nucleotide sequence ID" value="NC_000915.1"/>
</dbReference>
<dbReference type="RefSeq" id="WP_000557020.1">
    <property type="nucleotide sequence ID" value="NC_018939.1"/>
</dbReference>
<dbReference type="SMR" id="P56146"/>
<dbReference type="FunCoup" id="P56146">
    <property type="interactions" value="342"/>
</dbReference>
<dbReference type="STRING" id="85962.HP_0403"/>
<dbReference type="PaxDb" id="85962-C694_02045"/>
<dbReference type="EnsemblBacteria" id="AAD07472">
    <property type="protein sequence ID" value="AAD07472"/>
    <property type="gene ID" value="HP_0403"/>
</dbReference>
<dbReference type="KEGG" id="heo:C694_02045"/>
<dbReference type="KEGG" id="hpy:HP_0403"/>
<dbReference type="PATRIC" id="fig|85962.47.peg.427"/>
<dbReference type="eggNOG" id="COG0016">
    <property type="taxonomic scope" value="Bacteria"/>
</dbReference>
<dbReference type="InParanoid" id="P56146"/>
<dbReference type="OrthoDB" id="9800719at2"/>
<dbReference type="PhylomeDB" id="P56146"/>
<dbReference type="Proteomes" id="UP000000429">
    <property type="component" value="Chromosome"/>
</dbReference>
<dbReference type="GO" id="GO:0005737">
    <property type="term" value="C:cytoplasm"/>
    <property type="evidence" value="ECO:0000318"/>
    <property type="project" value="GO_Central"/>
</dbReference>
<dbReference type="GO" id="GO:0005524">
    <property type="term" value="F:ATP binding"/>
    <property type="evidence" value="ECO:0007669"/>
    <property type="project" value="UniProtKB-UniRule"/>
</dbReference>
<dbReference type="GO" id="GO:0000287">
    <property type="term" value="F:magnesium ion binding"/>
    <property type="evidence" value="ECO:0007669"/>
    <property type="project" value="UniProtKB-UniRule"/>
</dbReference>
<dbReference type="GO" id="GO:0004826">
    <property type="term" value="F:phenylalanine-tRNA ligase activity"/>
    <property type="evidence" value="ECO:0000318"/>
    <property type="project" value="GO_Central"/>
</dbReference>
<dbReference type="GO" id="GO:0000049">
    <property type="term" value="F:tRNA binding"/>
    <property type="evidence" value="ECO:0007669"/>
    <property type="project" value="InterPro"/>
</dbReference>
<dbReference type="GO" id="GO:0006432">
    <property type="term" value="P:phenylalanyl-tRNA aminoacylation"/>
    <property type="evidence" value="ECO:0000318"/>
    <property type="project" value="GO_Central"/>
</dbReference>
<dbReference type="CDD" id="cd00496">
    <property type="entry name" value="PheRS_alpha_core"/>
    <property type="match status" value="1"/>
</dbReference>
<dbReference type="FunFam" id="3.30.930.10:FF:000127">
    <property type="entry name" value="Phenylalanine--tRNA ligase alpha subunit"/>
    <property type="match status" value="1"/>
</dbReference>
<dbReference type="Gene3D" id="3.30.930.10">
    <property type="entry name" value="Bira Bifunctional Protein, Domain 2"/>
    <property type="match status" value="1"/>
</dbReference>
<dbReference type="HAMAP" id="MF_00281">
    <property type="entry name" value="Phe_tRNA_synth_alpha1"/>
    <property type="match status" value="1"/>
</dbReference>
<dbReference type="InterPro" id="IPR006195">
    <property type="entry name" value="aa-tRNA-synth_II"/>
</dbReference>
<dbReference type="InterPro" id="IPR045864">
    <property type="entry name" value="aa-tRNA-synth_II/BPL/LPL"/>
</dbReference>
<dbReference type="InterPro" id="IPR004529">
    <property type="entry name" value="Phe-tRNA-synth_IIc_asu"/>
</dbReference>
<dbReference type="InterPro" id="IPR004188">
    <property type="entry name" value="Phe-tRNA_ligase_II_N"/>
</dbReference>
<dbReference type="InterPro" id="IPR022911">
    <property type="entry name" value="Phe_tRNA_ligase_alpha1_bac"/>
</dbReference>
<dbReference type="InterPro" id="IPR002319">
    <property type="entry name" value="Phenylalanyl-tRNA_Synthase"/>
</dbReference>
<dbReference type="InterPro" id="IPR010978">
    <property type="entry name" value="tRNA-bd_arm"/>
</dbReference>
<dbReference type="NCBIfam" id="TIGR00468">
    <property type="entry name" value="pheS"/>
    <property type="match status" value="1"/>
</dbReference>
<dbReference type="PANTHER" id="PTHR11538:SF41">
    <property type="entry name" value="PHENYLALANINE--TRNA LIGASE, MITOCHONDRIAL"/>
    <property type="match status" value="1"/>
</dbReference>
<dbReference type="PANTHER" id="PTHR11538">
    <property type="entry name" value="PHENYLALANYL-TRNA SYNTHETASE"/>
    <property type="match status" value="1"/>
</dbReference>
<dbReference type="Pfam" id="PF02912">
    <property type="entry name" value="Phe_tRNA-synt_N"/>
    <property type="match status" value="1"/>
</dbReference>
<dbReference type="Pfam" id="PF01409">
    <property type="entry name" value="tRNA-synt_2d"/>
    <property type="match status" value="1"/>
</dbReference>
<dbReference type="SUPFAM" id="SSF55681">
    <property type="entry name" value="Class II aaRS and biotin synthetases"/>
    <property type="match status" value="1"/>
</dbReference>
<dbReference type="SUPFAM" id="SSF46589">
    <property type="entry name" value="tRNA-binding arm"/>
    <property type="match status" value="1"/>
</dbReference>
<dbReference type="PROSITE" id="PS50862">
    <property type="entry name" value="AA_TRNA_LIGASE_II"/>
    <property type="match status" value="1"/>
</dbReference>
<organism>
    <name type="scientific">Helicobacter pylori (strain ATCC 700392 / 26695)</name>
    <name type="common">Campylobacter pylori</name>
    <dbReference type="NCBI Taxonomy" id="85962"/>
    <lineage>
        <taxon>Bacteria</taxon>
        <taxon>Pseudomonadati</taxon>
        <taxon>Campylobacterota</taxon>
        <taxon>Epsilonproteobacteria</taxon>
        <taxon>Campylobacterales</taxon>
        <taxon>Helicobacteraceae</taxon>
        <taxon>Helicobacter</taxon>
    </lineage>
</organism>
<evidence type="ECO:0000250" key="1"/>
<evidence type="ECO:0000305" key="2"/>
<name>SYFA_HELPY</name>
<sequence>MHTLIERLEKVTNSKELEEARLNALGKKGVFADKFNQLKHLNGEEKNAFAKEIHHYKQAFEKAFEWKKKAIIELELEERLKKEKIDVSLFNAIKTSSSHPLNYTKNKIIEFFTPLGYKLEIGSLVEDDFHNFSALNLPPYHPARDMQDTFYFKDHKLLRTHTSPVQIHTMQEQTPPIKMICLGETFRRDYDLTHTPMFHQIEGLVVDQKGNIRFTHLKGVIEDFLHYFFGGVKLRWRSSFFPFTEPSAEVDISCVFCKQEGCRVCSHTGWLEVLGCGMVNNAVFEAIGYENVSGFAFGMGIERLAMLTCQINDLRSFFETDLRVLESF</sequence>
<gene>
    <name type="primary">pheS</name>
    <name type="ordered locus">HP_0403</name>
</gene>
<proteinExistence type="inferred from homology"/>
<reference key="1">
    <citation type="journal article" date="1997" name="Nature">
        <title>The complete genome sequence of the gastric pathogen Helicobacter pylori.</title>
        <authorList>
            <person name="Tomb J.-F."/>
            <person name="White O."/>
            <person name="Kerlavage A.R."/>
            <person name="Clayton R.A."/>
            <person name="Sutton G.G."/>
            <person name="Fleischmann R.D."/>
            <person name="Ketchum K.A."/>
            <person name="Klenk H.-P."/>
            <person name="Gill S.R."/>
            <person name="Dougherty B.A."/>
            <person name="Nelson K.E."/>
            <person name="Quackenbush J."/>
            <person name="Zhou L."/>
            <person name="Kirkness E.F."/>
            <person name="Peterson S.N."/>
            <person name="Loftus B.J."/>
            <person name="Richardson D.L."/>
            <person name="Dodson R.J."/>
            <person name="Khalak H.G."/>
            <person name="Glodek A."/>
            <person name="McKenney K."/>
            <person name="FitzGerald L.M."/>
            <person name="Lee N."/>
            <person name="Adams M.D."/>
            <person name="Hickey E.K."/>
            <person name="Berg D.E."/>
            <person name="Gocayne J.D."/>
            <person name="Utterback T.R."/>
            <person name="Peterson J.D."/>
            <person name="Kelley J.M."/>
            <person name="Cotton M.D."/>
            <person name="Weidman J.F."/>
            <person name="Fujii C."/>
            <person name="Bowman C."/>
            <person name="Watthey L."/>
            <person name="Wallin E."/>
            <person name="Hayes W.S."/>
            <person name="Borodovsky M."/>
            <person name="Karp P.D."/>
            <person name="Smith H.O."/>
            <person name="Fraser C.M."/>
            <person name="Venter J.C."/>
        </authorList>
    </citation>
    <scope>NUCLEOTIDE SEQUENCE [LARGE SCALE GENOMIC DNA]</scope>
    <source>
        <strain>ATCC 700392 / 26695</strain>
    </source>
</reference>